<reference key="1">
    <citation type="journal article" date="2014" name="Stand. Genomic Sci.">
        <title>Complete genome sequence of Anabaena variabilis ATCC 29413.</title>
        <authorList>
            <person name="Thiel T."/>
            <person name="Pratte B.S."/>
            <person name="Zhong J."/>
            <person name="Goodwin L."/>
            <person name="Copeland A."/>
            <person name="Lucas S."/>
            <person name="Han C."/>
            <person name="Pitluck S."/>
            <person name="Land M.L."/>
            <person name="Kyrpides N.C."/>
            <person name="Woyke T."/>
        </authorList>
    </citation>
    <scope>NUCLEOTIDE SEQUENCE [LARGE SCALE GENOMIC DNA]</scope>
    <source>
        <strain>ATCC 29413 / PCC 7937</strain>
    </source>
</reference>
<reference key="2">
    <citation type="submission" date="1992-12" db="EMBL/GenBank/DDBJ databases">
        <authorList>
            <person name="Monnerjahn U."/>
            <person name="Boehme H."/>
        </authorList>
    </citation>
    <scope>NUCLEOTIDE SEQUENCE [GENOMIC DNA] OF 1-15</scope>
</reference>
<reference key="3">
    <citation type="journal article" date="1995" name="Proc. Natl. Acad. Sci. U.S.A.">
        <title>A second nitrogenase in vegetative cells of a heterocyst-forming cyanobacterium.</title>
        <authorList>
            <person name="Thiel T."/>
            <person name="Lyons E.M."/>
            <person name="Erker J.C."/>
            <person name="Ernst A."/>
        </authorList>
    </citation>
    <scope>EXPRESSION PATTERN</scope>
</reference>
<accession>Q44507</accession>
<accession>Q3M667</accession>
<evidence type="ECO:0000250" key="1">
    <source>
        <dbReference type="UniProtKB" id="O29689"/>
    </source>
</evidence>
<evidence type="ECO:0000250" key="2">
    <source>
        <dbReference type="UniProtKB" id="P05341"/>
    </source>
</evidence>
<evidence type="ECO:0000250" key="3">
    <source>
        <dbReference type="UniProtKB" id="P0A6B9"/>
    </source>
</evidence>
<evidence type="ECO:0000305" key="4"/>
<proteinExistence type="inferred from homology"/>
<sequence length="400" mass="43685">MSVIYLDNNATTKVDPEVVEAIMPYLTDYYGNPSSMHTFGGQLGKAVRTAREQVAALLGADESEIVFTSCGTEGDNAAIRAALLAQPEKRHIITTQVEHPAVLNVCKQLETQGYTVTYLSVNGHGQLDLDELEASLTGNTALVTIMYANNETGTVFPIEEIGKRVKERGAIFHVDAVQAVGKIPLNMKTSTIDMLTISGHKIHAPKGIGALYVRRGVRFRPLLIGGHQERGRRAGTENVPGIVGLGKAAELELIHIETAIKKETRLRDRLEQTLLAKIPDCEVNGDVTQRLPNTTNIGFKYIEGEAILLSLNKYGICASSGSACTSGSLEPSHVLRAMGLPYTTLHGSIRFSLCRYTTEAQIDRVIEVMPEIVERLRALSPFKNDEAGWLQAQEQTLAHR</sequence>
<comment type="function">
    <text evidence="2">Catalyzes the removal of elemental sulfur atoms from cysteine to produce alanine. Seems to participate in the biosynthesis of the nitrogenase metalloclusters by providing the inorganic sulfur required for the Fe-S core formation.</text>
</comment>
<comment type="catalytic activity">
    <reaction evidence="2">
        <text>(sulfur carrier)-H + L-cysteine = (sulfur carrier)-SH + L-alanine</text>
        <dbReference type="Rhea" id="RHEA:43892"/>
        <dbReference type="Rhea" id="RHEA-COMP:14737"/>
        <dbReference type="Rhea" id="RHEA-COMP:14739"/>
        <dbReference type="ChEBI" id="CHEBI:29917"/>
        <dbReference type="ChEBI" id="CHEBI:35235"/>
        <dbReference type="ChEBI" id="CHEBI:57972"/>
        <dbReference type="ChEBI" id="CHEBI:64428"/>
        <dbReference type="EC" id="2.8.1.7"/>
    </reaction>
</comment>
<comment type="cofactor">
    <cofactor evidence="2">
        <name>pyridoxal 5'-phosphate</name>
        <dbReference type="ChEBI" id="CHEBI:597326"/>
    </cofactor>
</comment>
<comment type="subunit">
    <text evidence="2">Homodimer.</text>
</comment>
<comment type="miscellaneous">
    <text>Belongs to the NIF1 gene cluster which is expressed in heterocysts under anaerobic and aerobic conditions.</text>
</comment>
<comment type="similarity">
    <text evidence="4">Belongs to the class-V pyridoxal-phosphate-dependent aminotransferase family. NifS/IscS subfamily.</text>
</comment>
<name>NIFS1_TRIV2</name>
<organism>
    <name type="scientific">Trichormus variabilis (strain ATCC 29413 / PCC 7937)</name>
    <name type="common">Anabaena variabilis</name>
    <dbReference type="NCBI Taxonomy" id="240292"/>
    <lineage>
        <taxon>Bacteria</taxon>
        <taxon>Bacillati</taxon>
        <taxon>Cyanobacteriota</taxon>
        <taxon>Cyanophyceae</taxon>
        <taxon>Nostocales</taxon>
        <taxon>Nostocaceae</taxon>
        <taxon>Trichormus</taxon>
    </lineage>
</organism>
<feature type="chain" id="PRO_0000150248" description="Cysteine desulfurase 1">
    <location>
        <begin position="1"/>
        <end position="400"/>
    </location>
</feature>
<feature type="active site" description="Cysteine persulfide intermediate" evidence="2">
    <location>
        <position position="324"/>
    </location>
</feature>
<feature type="binding site" evidence="3">
    <location>
        <begin position="71"/>
        <end position="72"/>
    </location>
    <ligand>
        <name>pyridoxal 5'-phosphate</name>
        <dbReference type="ChEBI" id="CHEBI:597326"/>
    </ligand>
</feature>
<feature type="binding site" evidence="1">
    <location>
        <position position="150"/>
    </location>
    <ligand>
        <name>pyridoxal 5'-phosphate</name>
        <dbReference type="ChEBI" id="CHEBI:597326"/>
    </ligand>
</feature>
<feature type="binding site" evidence="3">
    <location>
        <position position="178"/>
    </location>
    <ligand>
        <name>pyridoxal 5'-phosphate</name>
        <dbReference type="ChEBI" id="CHEBI:597326"/>
    </ligand>
</feature>
<feature type="binding site" evidence="3">
    <location>
        <begin position="198"/>
        <end position="200"/>
    </location>
    <ligand>
        <name>pyridoxal 5'-phosphate</name>
        <dbReference type="ChEBI" id="CHEBI:597326"/>
    </ligand>
</feature>
<feature type="binding site" evidence="3">
    <location>
        <position position="236"/>
    </location>
    <ligand>
        <name>pyridoxal 5'-phosphate</name>
        <dbReference type="ChEBI" id="CHEBI:597326"/>
    </ligand>
</feature>
<feature type="binding site" description="via persulfide group" evidence="1">
    <location>
        <position position="324"/>
    </location>
    <ligand>
        <name>[2Fe-2S] cluster</name>
        <dbReference type="ChEBI" id="CHEBI:190135"/>
    </ligand>
</feature>
<feature type="modified residue" description="N6-(pyridoxal phosphate)lysine" evidence="3">
    <location>
        <position position="201"/>
    </location>
</feature>
<keyword id="KW-0408">Iron</keyword>
<keyword id="KW-0411">Iron-sulfur</keyword>
<keyword id="KW-0479">Metal-binding</keyword>
<keyword id="KW-0535">Nitrogen fixation</keyword>
<keyword id="KW-0663">Pyridoxal phosphate</keyword>
<keyword id="KW-0808">Transferase</keyword>
<dbReference type="EC" id="2.8.1.7" evidence="2"/>
<dbReference type="EMBL" id="CP000117">
    <property type="protein sequence ID" value="ABA23519.1"/>
    <property type="molecule type" value="Genomic_DNA"/>
</dbReference>
<dbReference type="EMBL" id="X69898">
    <property type="protein sequence ID" value="CAA49523.1"/>
    <property type="molecule type" value="Genomic_DNA"/>
</dbReference>
<dbReference type="PIR" id="S32677">
    <property type="entry name" value="S32677"/>
</dbReference>
<dbReference type="SMR" id="Q44507"/>
<dbReference type="STRING" id="240292.Ava_3914"/>
<dbReference type="KEGG" id="ava:Ava_3914"/>
<dbReference type="eggNOG" id="COG1104">
    <property type="taxonomic scope" value="Bacteria"/>
</dbReference>
<dbReference type="HOGENOM" id="CLU_003433_0_0_3"/>
<dbReference type="Proteomes" id="UP000002533">
    <property type="component" value="Chromosome"/>
</dbReference>
<dbReference type="GO" id="GO:0031071">
    <property type="term" value="F:cysteine desulfurase activity"/>
    <property type="evidence" value="ECO:0007669"/>
    <property type="project" value="UniProtKB-EC"/>
</dbReference>
<dbReference type="GO" id="GO:0051536">
    <property type="term" value="F:iron-sulfur cluster binding"/>
    <property type="evidence" value="ECO:0007669"/>
    <property type="project" value="UniProtKB-KW"/>
</dbReference>
<dbReference type="GO" id="GO:0046872">
    <property type="term" value="F:metal ion binding"/>
    <property type="evidence" value="ECO:0007669"/>
    <property type="project" value="UniProtKB-KW"/>
</dbReference>
<dbReference type="GO" id="GO:0030170">
    <property type="term" value="F:pyridoxal phosphate binding"/>
    <property type="evidence" value="ECO:0007669"/>
    <property type="project" value="InterPro"/>
</dbReference>
<dbReference type="GO" id="GO:0006520">
    <property type="term" value="P:amino acid metabolic process"/>
    <property type="evidence" value="ECO:0007669"/>
    <property type="project" value="InterPro"/>
</dbReference>
<dbReference type="GO" id="GO:0009399">
    <property type="term" value="P:nitrogen fixation"/>
    <property type="evidence" value="ECO:0007669"/>
    <property type="project" value="UniProtKB-KW"/>
</dbReference>
<dbReference type="FunFam" id="3.40.640.10:FF:000084">
    <property type="entry name" value="IscS-like cysteine desulfurase"/>
    <property type="match status" value="1"/>
</dbReference>
<dbReference type="Gene3D" id="1.10.260.50">
    <property type="match status" value="1"/>
</dbReference>
<dbReference type="Gene3D" id="3.90.1150.10">
    <property type="entry name" value="Aspartate Aminotransferase, domain 1"/>
    <property type="match status" value="1"/>
</dbReference>
<dbReference type="Gene3D" id="3.40.640.10">
    <property type="entry name" value="Type I PLP-dependent aspartate aminotransferase-like (Major domain)"/>
    <property type="match status" value="1"/>
</dbReference>
<dbReference type="InterPro" id="IPR000192">
    <property type="entry name" value="Aminotrans_V_dom"/>
</dbReference>
<dbReference type="InterPro" id="IPR020578">
    <property type="entry name" value="Aminotrans_V_PyrdxlP_BS"/>
</dbReference>
<dbReference type="InterPro" id="IPR017772">
    <property type="entry name" value="Cys_deSase_NifS_bac/arc"/>
</dbReference>
<dbReference type="InterPro" id="IPR016454">
    <property type="entry name" value="Cysteine_dSase"/>
</dbReference>
<dbReference type="InterPro" id="IPR015424">
    <property type="entry name" value="PyrdxlP-dep_Trfase"/>
</dbReference>
<dbReference type="InterPro" id="IPR015421">
    <property type="entry name" value="PyrdxlP-dep_Trfase_major"/>
</dbReference>
<dbReference type="InterPro" id="IPR015422">
    <property type="entry name" value="PyrdxlP-dep_Trfase_small"/>
</dbReference>
<dbReference type="NCBIfam" id="TIGR03402">
    <property type="entry name" value="FeS_nifS"/>
    <property type="match status" value="1"/>
</dbReference>
<dbReference type="NCBIfam" id="NF002806">
    <property type="entry name" value="PRK02948.1"/>
    <property type="match status" value="1"/>
</dbReference>
<dbReference type="PANTHER" id="PTHR11601:SF34">
    <property type="entry name" value="CYSTEINE DESULFURASE"/>
    <property type="match status" value="1"/>
</dbReference>
<dbReference type="PANTHER" id="PTHR11601">
    <property type="entry name" value="CYSTEINE DESULFURYLASE FAMILY MEMBER"/>
    <property type="match status" value="1"/>
</dbReference>
<dbReference type="Pfam" id="PF00266">
    <property type="entry name" value="Aminotran_5"/>
    <property type="match status" value="1"/>
</dbReference>
<dbReference type="PIRSF" id="PIRSF005572">
    <property type="entry name" value="NifS"/>
    <property type="match status" value="1"/>
</dbReference>
<dbReference type="SUPFAM" id="SSF53383">
    <property type="entry name" value="PLP-dependent transferases"/>
    <property type="match status" value="1"/>
</dbReference>
<dbReference type="PROSITE" id="PS00595">
    <property type="entry name" value="AA_TRANSFER_CLASS_5"/>
    <property type="match status" value="1"/>
</dbReference>
<protein>
    <recommendedName>
        <fullName evidence="2">Cysteine desulfurase 1</fullName>
        <ecNumber evidence="2">2.8.1.7</ecNumber>
    </recommendedName>
    <alternativeName>
        <fullName evidence="2">Nitrogenase metalloclusters biosynthesis protein nifS1</fullName>
    </alternativeName>
</protein>
<gene>
    <name evidence="2" type="primary">nifS1</name>
    <name evidence="2" type="synonym">nifS</name>
    <name type="ordered locus">Ava_3914</name>
</gene>